<sequence length="203" mass="22933">MSRYTGPKWRISRRLGVSLSGTGKELSRRAYAPGDHGAGRRAKISEYGMQLREKQKLRFTYGLTERQFKALFNKAGKIRKGTHGTNFMISLEQRLDSVVYRLGLATTRQQARQLVNHGHILVDGKRVDIPSYSVQPGQVVSVREKSKNILPIQAAIESVVARPQFVSLDTEKLEGSLVRLPEREELDADINEALIVEYYNHLG</sequence>
<keyword id="KW-1185">Reference proteome</keyword>
<keyword id="KW-0687">Ribonucleoprotein</keyword>
<keyword id="KW-0689">Ribosomal protein</keyword>
<keyword id="KW-0694">RNA-binding</keyword>
<keyword id="KW-0699">rRNA-binding</keyword>
<organism>
    <name type="scientific">Leuconostoc mesenteroides subsp. mesenteroides (strain ATCC 8293 / DSM 20343 / BCRC 11652 / CCM 1803 / JCM 6124 / NCDO 523 / NBRC 100496 / NCIMB 8023 / NCTC 12954 / NRRL B-1118 / 37Y)</name>
    <dbReference type="NCBI Taxonomy" id="203120"/>
    <lineage>
        <taxon>Bacteria</taxon>
        <taxon>Bacillati</taxon>
        <taxon>Bacillota</taxon>
        <taxon>Bacilli</taxon>
        <taxon>Lactobacillales</taxon>
        <taxon>Lactobacillaceae</taxon>
        <taxon>Leuconostoc</taxon>
    </lineage>
</organism>
<dbReference type="EMBL" id="CP000414">
    <property type="protein sequence ID" value="ABJ62919.1"/>
    <property type="molecule type" value="Genomic_DNA"/>
</dbReference>
<dbReference type="RefSeq" id="WP_011680413.1">
    <property type="nucleotide sequence ID" value="NC_008531.1"/>
</dbReference>
<dbReference type="SMR" id="Q03V53"/>
<dbReference type="EnsemblBacteria" id="ABJ62919">
    <property type="protein sequence ID" value="ABJ62919"/>
    <property type="gene ID" value="LEUM_1842"/>
</dbReference>
<dbReference type="GeneID" id="29577284"/>
<dbReference type="KEGG" id="lme:LEUM_1842"/>
<dbReference type="eggNOG" id="COG0522">
    <property type="taxonomic scope" value="Bacteria"/>
</dbReference>
<dbReference type="HOGENOM" id="CLU_092403_0_1_9"/>
<dbReference type="Proteomes" id="UP000000362">
    <property type="component" value="Chromosome"/>
</dbReference>
<dbReference type="GO" id="GO:0015935">
    <property type="term" value="C:small ribosomal subunit"/>
    <property type="evidence" value="ECO:0007669"/>
    <property type="project" value="InterPro"/>
</dbReference>
<dbReference type="GO" id="GO:0019843">
    <property type="term" value="F:rRNA binding"/>
    <property type="evidence" value="ECO:0007669"/>
    <property type="project" value="UniProtKB-UniRule"/>
</dbReference>
<dbReference type="GO" id="GO:0003735">
    <property type="term" value="F:structural constituent of ribosome"/>
    <property type="evidence" value="ECO:0007669"/>
    <property type="project" value="InterPro"/>
</dbReference>
<dbReference type="GO" id="GO:0042274">
    <property type="term" value="P:ribosomal small subunit biogenesis"/>
    <property type="evidence" value="ECO:0007669"/>
    <property type="project" value="TreeGrafter"/>
</dbReference>
<dbReference type="GO" id="GO:0006412">
    <property type="term" value="P:translation"/>
    <property type="evidence" value="ECO:0007669"/>
    <property type="project" value="UniProtKB-UniRule"/>
</dbReference>
<dbReference type="CDD" id="cd00165">
    <property type="entry name" value="S4"/>
    <property type="match status" value="1"/>
</dbReference>
<dbReference type="FunFam" id="3.10.290.10:FF:000001">
    <property type="entry name" value="30S ribosomal protein S4"/>
    <property type="match status" value="1"/>
</dbReference>
<dbReference type="Gene3D" id="1.10.1050.10">
    <property type="entry name" value="Ribosomal Protein S4 Delta 41, Chain A, domain 1"/>
    <property type="match status" value="1"/>
</dbReference>
<dbReference type="Gene3D" id="3.10.290.10">
    <property type="entry name" value="RNA-binding S4 domain"/>
    <property type="match status" value="1"/>
</dbReference>
<dbReference type="HAMAP" id="MF_01306_B">
    <property type="entry name" value="Ribosomal_uS4_B"/>
    <property type="match status" value="1"/>
</dbReference>
<dbReference type="InterPro" id="IPR022801">
    <property type="entry name" value="Ribosomal_uS4"/>
</dbReference>
<dbReference type="InterPro" id="IPR005709">
    <property type="entry name" value="Ribosomal_uS4_bac-type"/>
</dbReference>
<dbReference type="InterPro" id="IPR018079">
    <property type="entry name" value="Ribosomal_uS4_CS"/>
</dbReference>
<dbReference type="InterPro" id="IPR001912">
    <property type="entry name" value="Ribosomal_uS4_N"/>
</dbReference>
<dbReference type="InterPro" id="IPR002942">
    <property type="entry name" value="S4_RNA-bd"/>
</dbReference>
<dbReference type="InterPro" id="IPR036986">
    <property type="entry name" value="S4_RNA-bd_sf"/>
</dbReference>
<dbReference type="NCBIfam" id="NF003717">
    <property type="entry name" value="PRK05327.1"/>
    <property type="match status" value="1"/>
</dbReference>
<dbReference type="NCBIfam" id="TIGR01017">
    <property type="entry name" value="rpsD_bact"/>
    <property type="match status" value="1"/>
</dbReference>
<dbReference type="PANTHER" id="PTHR11831">
    <property type="entry name" value="30S 40S RIBOSOMAL PROTEIN"/>
    <property type="match status" value="1"/>
</dbReference>
<dbReference type="PANTHER" id="PTHR11831:SF4">
    <property type="entry name" value="SMALL RIBOSOMAL SUBUNIT PROTEIN US4M"/>
    <property type="match status" value="1"/>
</dbReference>
<dbReference type="Pfam" id="PF00163">
    <property type="entry name" value="Ribosomal_S4"/>
    <property type="match status" value="1"/>
</dbReference>
<dbReference type="Pfam" id="PF01479">
    <property type="entry name" value="S4"/>
    <property type="match status" value="1"/>
</dbReference>
<dbReference type="SMART" id="SM01390">
    <property type="entry name" value="Ribosomal_S4"/>
    <property type="match status" value="1"/>
</dbReference>
<dbReference type="SMART" id="SM00363">
    <property type="entry name" value="S4"/>
    <property type="match status" value="1"/>
</dbReference>
<dbReference type="SUPFAM" id="SSF55174">
    <property type="entry name" value="Alpha-L RNA-binding motif"/>
    <property type="match status" value="1"/>
</dbReference>
<dbReference type="PROSITE" id="PS00632">
    <property type="entry name" value="RIBOSOMAL_S4"/>
    <property type="match status" value="1"/>
</dbReference>
<dbReference type="PROSITE" id="PS50889">
    <property type="entry name" value="S4"/>
    <property type="match status" value="1"/>
</dbReference>
<accession>Q03V53</accession>
<comment type="function">
    <text evidence="1">One of the primary rRNA binding proteins, it binds directly to 16S rRNA where it nucleates assembly of the body of the 30S subunit.</text>
</comment>
<comment type="function">
    <text evidence="1">With S5 and S12 plays an important role in translational accuracy.</text>
</comment>
<comment type="subunit">
    <text evidence="1">Part of the 30S ribosomal subunit. Contacts protein S5. The interaction surface between S4 and S5 is involved in control of translational fidelity.</text>
</comment>
<comment type="similarity">
    <text evidence="1">Belongs to the universal ribosomal protein uS4 family.</text>
</comment>
<evidence type="ECO:0000255" key="1">
    <source>
        <dbReference type="HAMAP-Rule" id="MF_01306"/>
    </source>
</evidence>
<evidence type="ECO:0000305" key="2"/>
<name>RS4_LEUMM</name>
<feature type="chain" id="PRO_0000293304" description="Small ribosomal subunit protein uS4">
    <location>
        <begin position="1"/>
        <end position="203"/>
    </location>
</feature>
<feature type="domain" description="S4 RNA-binding" evidence="1">
    <location>
        <begin position="93"/>
        <end position="153"/>
    </location>
</feature>
<proteinExistence type="inferred from homology"/>
<reference key="1">
    <citation type="journal article" date="2006" name="Proc. Natl. Acad. Sci. U.S.A.">
        <title>Comparative genomics of the lactic acid bacteria.</title>
        <authorList>
            <person name="Makarova K.S."/>
            <person name="Slesarev A."/>
            <person name="Wolf Y.I."/>
            <person name="Sorokin A."/>
            <person name="Mirkin B."/>
            <person name="Koonin E.V."/>
            <person name="Pavlov A."/>
            <person name="Pavlova N."/>
            <person name="Karamychev V."/>
            <person name="Polouchine N."/>
            <person name="Shakhova V."/>
            <person name="Grigoriev I."/>
            <person name="Lou Y."/>
            <person name="Rohksar D."/>
            <person name="Lucas S."/>
            <person name="Huang K."/>
            <person name="Goodstein D.M."/>
            <person name="Hawkins T."/>
            <person name="Plengvidhya V."/>
            <person name="Welker D."/>
            <person name="Hughes J."/>
            <person name="Goh Y."/>
            <person name="Benson A."/>
            <person name="Baldwin K."/>
            <person name="Lee J.-H."/>
            <person name="Diaz-Muniz I."/>
            <person name="Dosti B."/>
            <person name="Smeianov V."/>
            <person name="Wechter W."/>
            <person name="Barabote R."/>
            <person name="Lorca G."/>
            <person name="Altermann E."/>
            <person name="Barrangou R."/>
            <person name="Ganesan B."/>
            <person name="Xie Y."/>
            <person name="Rawsthorne H."/>
            <person name="Tamir D."/>
            <person name="Parker C."/>
            <person name="Breidt F."/>
            <person name="Broadbent J.R."/>
            <person name="Hutkins R."/>
            <person name="O'Sullivan D."/>
            <person name="Steele J."/>
            <person name="Unlu G."/>
            <person name="Saier M.H. Jr."/>
            <person name="Klaenhammer T."/>
            <person name="Richardson P."/>
            <person name="Kozyavkin S."/>
            <person name="Weimer B.C."/>
            <person name="Mills D.A."/>
        </authorList>
    </citation>
    <scope>NUCLEOTIDE SEQUENCE [LARGE SCALE GENOMIC DNA]</scope>
    <source>
        <strain>ATCC 8293 / DSM 20343 / BCRC 11652 / CCM 1803 / JCM 6124 / NCDO 523 / NBRC 100496 / NCIMB 8023 / NCTC 12954 / NRRL B-1118 / 37Y</strain>
    </source>
</reference>
<protein>
    <recommendedName>
        <fullName evidence="1">Small ribosomal subunit protein uS4</fullName>
    </recommendedName>
    <alternativeName>
        <fullName evidence="2">30S ribosomal protein S4</fullName>
    </alternativeName>
</protein>
<gene>
    <name evidence="1" type="primary">rpsD</name>
    <name type="ordered locus">LEUM_1842</name>
</gene>